<comment type="function">
    <text evidence="1">Catalyzes the radical-mediated insertion of two sulfur atoms into the C-6 and C-8 positions of the octanoyl moiety bound to the lipoyl domains of lipoate-dependent enzymes, thereby converting the octanoylated domains into lipoylated derivatives.</text>
</comment>
<comment type="catalytic activity">
    <reaction evidence="1">
        <text>[[Fe-S] cluster scaffold protein carrying a second [4Fe-4S](2+) cluster] + N(6)-octanoyl-L-lysyl-[protein] + 2 oxidized [2Fe-2S]-[ferredoxin] + 2 S-adenosyl-L-methionine + 4 H(+) = [[Fe-S] cluster scaffold protein] + N(6)-[(R)-dihydrolipoyl]-L-lysyl-[protein] + 4 Fe(3+) + 2 hydrogen sulfide + 2 5'-deoxyadenosine + 2 L-methionine + 2 reduced [2Fe-2S]-[ferredoxin]</text>
        <dbReference type="Rhea" id="RHEA:16585"/>
        <dbReference type="Rhea" id="RHEA-COMP:9928"/>
        <dbReference type="Rhea" id="RHEA-COMP:10000"/>
        <dbReference type="Rhea" id="RHEA-COMP:10001"/>
        <dbReference type="Rhea" id="RHEA-COMP:10475"/>
        <dbReference type="Rhea" id="RHEA-COMP:14568"/>
        <dbReference type="Rhea" id="RHEA-COMP:14569"/>
        <dbReference type="ChEBI" id="CHEBI:15378"/>
        <dbReference type="ChEBI" id="CHEBI:17319"/>
        <dbReference type="ChEBI" id="CHEBI:29034"/>
        <dbReference type="ChEBI" id="CHEBI:29919"/>
        <dbReference type="ChEBI" id="CHEBI:33722"/>
        <dbReference type="ChEBI" id="CHEBI:33737"/>
        <dbReference type="ChEBI" id="CHEBI:33738"/>
        <dbReference type="ChEBI" id="CHEBI:57844"/>
        <dbReference type="ChEBI" id="CHEBI:59789"/>
        <dbReference type="ChEBI" id="CHEBI:78809"/>
        <dbReference type="ChEBI" id="CHEBI:83100"/>
        <dbReference type="EC" id="2.8.1.8"/>
    </reaction>
</comment>
<comment type="cofactor">
    <cofactor evidence="1">
        <name>[4Fe-4S] cluster</name>
        <dbReference type="ChEBI" id="CHEBI:49883"/>
    </cofactor>
    <text evidence="1">Binds 2 [4Fe-4S] clusters per subunit. One cluster is coordinated with 3 cysteines and an exchangeable S-adenosyl-L-methionine.</text>
</comment>
<comment type="pathway">
    <text evidence="1">Protein modification; protein lipoylation via endogenous pathway; protein N(6)-(lipoyl)lysine from octanoyl-[acyl-carrier-protein]: step 2/2.</text>
</comment>
<comment type="subcellular location">
    <subcellularLocation>
        <location evidence="1">Cytoplasm</location>
    </subcellularLocation>
</comment>
<comment type="similarity">
    <text evidence="1">Belongs to the radical SAM superfamily. Lipoyl synthase family.</text>
</comment>
<comment type="sequence caution" evidence="3">
    <conflict type="erroneous initiation">
        <sequence resource="EMBL-CDS" id="ABF02938"/>
    </conflict>
</comment>
<proteinExistence type="inferred from homology"/>
<evidence type="ECO:0000255" key="1">
    <source>
        <dbReference type="HAMAP-Rule" id="MF_00206"/>
    </source>
</evidence>
<evidence type="ECO:0000255" key="2">
    <source>
        <dbReference type="PROSITE-ProRule" id="PRU01266"/>
    </source>
</evidence>
<evidence type="ECO:0000305" key="3"/>
<sequence length="321" mass="36072">MSKPIVMERGVKYRDADKMALIPVKNVATEREALLRKPEWMKIKLPADSTRIQGIKAAMRKNGLHSVCEEASCPNLAECFNHGTATFMILGAICTRRCPFCDVAHGRPVAPDANEPVKLAQTIADMALRYVVITSVDRDDLRDGGAQHFADCITAIREKSPQIKIETLVPDFRGRMDRALDILTATPPDVFNHNLENVPRIYRQVRPGADYNWSLKLLERFKEAHPEIPTKSGLMVGLGETNEEIIEVMRDLRRHGVTMLTLGQYLQPSRHHLPVQRYVSPDEFDEMKAEALAMGFTHAACGPFVRSSYHADLQAKGMEVK</sequence>
<protein>
    <recommendedName>
        <fullName evidence="1">Lipoyl synthase</fullName>
        <ecNumber evidence="1">2.8.1.8</ecNumber>
    </recommendedName>
    <alternativeName>
        <fullName evidence="1">Lip-syn</fullName>
        <shortName evidence="1">LS</shortName>
    </alternativeName>
    <alternativeName>
        <fullName evidence="1">Lipoate synthase</fullName>
    </alternativeName>
    <alternativeName>
        <fullName evidence="1">Lipoic acid synthase</fullName>
    </alternativeName>
    <alternativeName>
        <fullName evidence="1">Sulfur insertion protein LipA</fullName>
    </alternativeName>
</protein>
<reference key="1">
    <citation type="journal article" date="2006" name="BMC Genomics">
        <title>Complete genome sequence of Shigella flexneri 5b and comparison with Shigella flexneri 2a.</title>
        <authorList>
            <person name="Nie H."/>
            <person name="Yang F."/>
            <person name="Zhang X."/>
            <person name="Yang J."/>
            <person name="Chen L."/>
            <person name="Wang J."/>
            <person name="Xiong Z."/>
            <person name="Peng J."/>
            <person name="Sun L."/>
            <person name="Dong J."/>
            <person name="Xue Y."/>
            <person name="Xu X."/>
            <person name="Chen S."/>
            <person name="Yao Z."/>
            <person name="Shen Y."/>
            <person name="Jin Q."/>
        </authorList>
    </citation>
    <scope>NUCLEOTIDE SEQUENCE [LARGE SCALE GENOMIC DNA]</scope>
    <source>
        <strain>8401</strain>
    </source>
</reference>
<gene>
    <name evidence="1" type="primary">lipA</name>
    <name type="ordered locus">SFV_0698</name>
</gene>
<name>LIPA_SHIF8</name>
<accession>Q0T6N8</accession>
<organism>
    <name type="scientific">Shigella flexneri serotype 5b (strain 8401)</name>
    <dbReference type="NCBI Taxonomy" id="373384"/>
    <lineage>
        <taxon>Bacteria</taxon>
        <taxon>Pseudomonadati</taxon>
        <taxon>Pseudomonadota</taxon>
        <taxon>Gammaproteobacteria</taxon>
        <taxon>Enterobacterales</taxon>
        <taxon>Enterobacteriaceae</taxon>
        <taxon>Shigella</taxon>
    </lineage>
</organism>
<keyword id="KW-0004">4Fe-4S</keyword>
<keyword id="KW-0963">Cytoplasm</keyword>
<keyword id="KW-0408">Iron</keyword>
<keyword id="KW-0411">Iron-sulfur</keyword>
<keyword id="KW-0479">Metal-binding</keyword>
<keyword id="KW-0949">S-adenosyl-L-methionine</keyword>
<keyword id="KW-0808">Transferase</keyword>
<dbReference type="EC" id="2.8.1.8" evidence="1"/>
<dbReference type="EMBL" id="CP000266">
    <property type="protein sequence ID" value="ABF02938.1"/>
    <property type="status" value="ALT_INIT"/>
    <property type="molecule type" value="Genomic_DNA"/>
</dbReference>
<dbReference type="RefSeq" id="WP_000042632.1">
    <property type="nucleotide sequence ID" value="NC_008258.1"/>
</dbReference>
<dbReference type="SMR" id="Q0T6N8"/>
<dbReference type="GeneID" id="93776854"/>
<dbReference type="KEGG" id="sfv:SFV_0698"/>
<dbReference type="HOGENOM" id="CLU_033144_2_1_6"/>
<dbReference type="UniPathway" id="UPA00538">
    <property type="reaction ID" value="UER00593"/>
</dbReference>
<dbReference type="Proteomes" id="UP000000659">
    <property type="component" value="Chromosome"/>
</dbReference>
<dbReference type="GO" id="GO:0005737">
    <property type="term" value="C:cytoplasm"/>
    <property type="evidence" value="ECO:0007669"/>
    <property type="project" value="UniProtKB-SubCell"/>
</dbReference>
<dbReference type="GO" id="GO:0051539">
    <property type="term" value="F:4 iron, 4 sulfur cluster binding"/>
    <property type="evidence" value="ECO:0007669"/>
    <property type="project" value="UniProtKB-UniRule"/>
</dbReference>
<dbReference type="GO" id="GO:0016992">
    <property type="term" value="F:lipoate synthase activity"/>
    <property type="evidence" value="ECO:0007669"/>
    <property type="project" value="UniProtKB-UniRule"/>
</dbReference>
<dbReference type="GO" id="GO:0046872">
    <property type="term" value="F:metal ion binding"/>
    <property type="evidence" value="ECO:0007669"/>
    <property type="project" value="UniProtKB-KW"/>
</dbReference>
<dbReference type="CDD" id="cd01335">
    <property type="entry name" value="Radical_SAM"/>
    <property type="match status" value="1"/>
</dbReference>
<dbReference type="FunFam" id="3.20.20.70:FF:000023">
    <property type="entry name" value="Lipoyl synthase"/>
    <property type="match status" value="1"/>
</dbReference>
<dbReference type="Gene3D" id="3.20.20.70">
    <property type="entry name" value="Aldolase class I"/>
    <property type="match status" value="1"/>
</dbReference>
<dbReference type="HAMAP" id="MF_00206">
    <property type="entry name" value="Lipoyl_synth"/>
    <property type="match status" value="1"/>
</dbReference>
<dbReference type="InterPro" id="IPR013785">
    <property type="entry name" value="Aldolase_TIM"/>
</dbReference>
<dbReference type="InterPro" id="IPR006638">
    <property type="entry name" value="Elp3/MiaA/NifB-like_rSAM"/>
</dbReference>
<dbReference type="InterPro" id="IPR031691">
    <property type="entry name" value="LIAS_N"/>
</dbReference>
<dbReference type="InterPro" id="IPR003698">
    <property type="entry name" value="Lipoyl_synth"/>
</dbReference>
<dbReference type="InterPro" id="IPR007197">
    <property type="entry name" value="rSAM"/>
</dbReference>
<dbReference type="NCBIfam" id="TIGR00510">
    <property type="entry name" value="lipA"/>
    <property type="match status" value="1"/>
</dbReference>
<dbReference type="NCBIfam" id="NF004019">
    <property type="entry name" value="PRK05481.1"/>
    <property type="match status" value="1"/>
</dbReference>
<dbReference type="NCBIfam" id="NF009544">
    <property type="entry name" value="PRK12928.1"/>
    <property type="match status" value="1"/>
</dbReference>
<dbReference type="PANTHER" id="PTHR10949">
    <property type="entry name" value="LIPOYL SYNTHASE"/>
    <property type="match status" value="1"/>
</dbReference>
<dbReference type="PANTHER" id="PTHR10949:SF0">
    <property type="entry name" value="LIPOYL SYNTHASE, MITOCHONDRIAL"/>
    <property type="match status" value="1"/>
</dbReference>
<dbReference type="Pfam" id="PF16881">
    <property type="entry name" value="LIAS_N"/>
    <property type="match status" value="1"/>
</dbReference>
<dbReference type="Pfam" id="PF04055">
    <property type="entry name" value="Radical_SAM"/>
    <property type="match status" value="1"/>
</dbReference>
<dbReference type="PIRSF" id="PIRSF005963">
    <property type="entry name" value="Lipoyl_synth"/>
    <property type="match status" value="1"/>
</dbReference>
<dbReference type="SFLD" id="SFLDF00271">
    <property type="entry name" value="lipoyl_synthase"/>
    <property type="match status" value="1"/>
</dbReference>
<dbReference type="SFLD" id="SFLDG01058">
    <property type="entry name" value="lipoyl_synthase_like"/>
    <property type="match status" value="1"/>
</dbReference>
<dbReference type="SMART" id="SM00729">
    <property type="entry name" value="Elp3"/>
    <property type="match status" value="1"/>
</dbReference>
<dbReference type="SUPFAM" id="SSF102114">
    <property type="entry name" value="Radical SAM enzymes"/>
    <property type="match status" value="1"/>
</dbReference>
<dbReference type="PROSITE" id="PS51918">
    <property type="entry name" value="RADICAL_SAM"/>
    <property type="match status" value="1"/>
</dbReference>
<feature type="chain" id="PRO_0000325309" description="Lipoyl synthase">
    <location>
        <begin position="1"/>
        <end position="321"/>
    </location>
</feature>
<feature type="domain" description="Radical SAM core" evidence="2">
    <location>
        <begin position="80"/>
        <end position="297"/>
    </location>
</feature>
<feature type="binding site" evidence="1">
    <location>
        <position position="68"/>
    </location>
    <ligand>
        <name>[4Fe-4S] cluster</name>
        <dbReference type="ChEBI" id="CHEBI:49883"/>
        <label>1</label>
    </ligand>
</feature>
<feature type="binding site" evidence="1">
    <location>
        <position position="73"/>
    </location>
    <ligand>
        <name>[4Fe-4S] cluster</name>
        <dbReference type="ChEBI" id="CHEBI:49883"/>
        <label>1</label>
    </ligand>
</feature>
<feature type="binding site" evidence="1">
    <location>
        <position position="79"/>
    </location>
    <ligand>
        <name>[4Fe-4S] cluster</name>
        <dbReference type="ChEBI" id="CHEBI:49883"/>
        <label>1</label>
    </ligand>
</feature>
<feature type="binding site" evidence="1">
    <location>
        <position position="94"/>
    </location>
    <ligand>
        <name>[4Fe-4S] cluster</name>
        <dbReference type="ChEBI" id="CHEBI:49883"/>
        <label>2</label>
        <note>4Fe-4S-S-AdoMet</note>
    </ligand>
</feature>
<feature type="binding site" evidence="1">
    <location>
        <position position="98"/>
    </location>
    <ligand>
        <name>[4Fe-4S] cluster</name>
        <dbReference type="ChEBI" id="CHEBI:49883"/>
        <label>2</label>
        <note>4Fe-4S-S-AdoMet</note>
    </ligand>
</feature>
<feature type="binding site" evidence="1">
    <location>
        <position position="101"/>
    </location>
    <ligand>
        <name>[4Fe-4S] cluster</name>
        <dbReference type="ChEBI" id="CHEBI:49883"/>
        <label>2</label>
        <note>4Fe-4S-S-AdoMet</note>
    </ligand>
</feature>
<feature type="binding site" evidence="1">
    <location>
        <position position="308"/>
    </location>
    <ligand>
        <name>[4Fe-4S] cluster</name>
        <dbReference type="ChEBI" id="CHEBI:49883"/>
        <label>1</label>
    </ligand>
</feature>